<proteinExistence type="inferred from homology"/>
<reference key="1">
    <citation type="journal article" date="2002" name="Nature">
        <title>The genome sequence of Schizosaccharomyces pombe.</title>
        <authorList>
            <person name="Wood V."/>
            <person name="Gwilliam R."/>
            <person name="Rajandream M.A."/>
            <person name="Lyne M.H."/>
            <person name="Lyne R."/>
            <person name="Stewart A."/>
            <person name="Sgouros J.G."/>
            <person name="Peat N."/>
            <person name="Hayles J."/>
            <person name="Baker S.G."/>
            <person name="Basham D."/>
            <person name="Bowman S."/>
            <person name="Brooks K."/>
            <person name="Brown D."/>
            <person name="Brown S."/>
            <person name="Chillingworth T."/>
            <person name="Churcher C.M."/>
            <person name="Collins M."/>
            <person name="Connor R."/>
            <person name="Cronin A."/>
            <person name="Davis P."/>
            <person name="Feltwell T."/>
            <person name="Fraser A."/>
            <person name="Gentles S."/>
            <person name="Goble A."/>
            <person name="Hamlin N."/>
            <person name="Harris D.E."/>
            <person name="Hidalgo J."/>
            <person name="Hodgson G."/>
            <person name="Holroyd S."/>
            <person name="Hornsby T."/>
            <person name="Howarth S."/>
            <person name="Huckle E.J."/>
            <person name="Hunt S."/>
            <person name="Jagels K."/>
            <person name="James K.D."/>
            <person name="Jones L."/>
            <person name="Jones M."/>
            <person name="Leather S."/>
            <person name="McDonald S."/>
            <person name="McLean J."/>
            <person name="Mooney P."/>
            <person name="Moule S."/>
            <person name="Mungall K.L."/>
            <person name="Murphy L.D."/>
            <person name="Niblett D."/>
            <person name="Odell C."/>
            <person name="Oliver K."/>
            <person name="O'Neil S."/>
            <person name="Pearson D."/>
            <person name="Quail M.A."/>
            <person name="Rabbinowitsch E."/>
            <person name="Rutherford K.M."/>
            <person name="Rutter S."/>
            <person name="Saunders D."/>
            <person name="Seeger K."/>
            <person name="Sharp S."/>
            <person name="Skelton J."/>
            <person name="Simmonds M.N."/>
            <person name="Squares R."/>
            <person name="Squares S."/>
            <person name="Stevens K."/>
            <person name="Taylor K."/>
            <person name="Taylor R.G."/>
            <person name="Tivey A."/>
            <person name="Walsh S.V."/>
            <person name="Warren T."/>
            <person name="Whitehead S."/>
            <person name="Woodward J.R."/>
            <person name="Volckaert G."/>
            <person name="Aert R."/>
            <person name="Robben J."/>
            <person name="Grymonprez B."/>
            <person name="Weltjens I."/>
            <person name="Vanstreels E."/>
            <person name="Rieger M."/>
            <person name="Schaefer M."/>
            <person name="Mueller-Auer S."/>
            <person name="Gabel C."/>
            <person name="Fuchs M."/>
            <person name="Duesterhoeft A."/>
            <person name="Fritzc C."/>
            <person name="Holzer E."/>
            <person name="Moestl D."/>
            <person name="Hilbert H."/>
            <person name="Borzym K."/>
            <person name="Langer I."/>
            <person name="Beck A."/>
            <person name="Lehrach H."/>
            <person name="Reinhardt R."/>
            <person name="Pohl T.M."/>
            <person name="Eger P."/>
            <person name="Zimmermann W."/>
            <person name="Wedler H."/>
            <person name="Wambutt R."/>
            <person name="Purnelle B."/>
            <person name="Goffeau A."/>
            <person name="Cadieu E."/>
            <person name="Dreano S."/>
            <person name="Gloux S."/>
            <person name="Lelaure V."/>
            <person name="Mottier S."/>
            <person name="Galibert F."/>
            <person name="Aves S.J."/>
            <person name="Xiang Z."/>
            <person name="Hunt C."/>
            <person name="Moore K."/>
            <person name="Hurst S.M."/>
            <person name="Lucas M."/>
            <person name="Rochet M."/>
            <person name="Gaillardin C."/>
            <person name="Tallada V.A."/>
            <person name="Garzon A."/>
            <person name="Thode G."/>
            <person name="Daga R.R."/>
            <person name="Cruzado L."/>
            <person name="Jimenez J."/>
            <person name="Sanchez M."/>
            <person name="del Rey F."/>
            <person name="Benito J."/>
            <person name="Dominguez A."/>
            <person name="Revuelta J.L."/>
            <person name="Moreno S."/>
            <person name="Armstrong J."/>
            <person name="Forsburg S.L."/>
            <person name="Cerutti L."/>
            <person name="Lowe T."/>
            <person name="McCombie W.R."/>
            <person name="Paulsen I."/>
            <person name="Potashkin J."/>
            <person name="Shpakovski G.V."/>
            <person name="Ussery D."/>
            <person name="Barrell B.G."/>
            <person name="Nurse P."/>
        </authorList>
    </citation>
    <scope>NUCLEOTIDE SEQUENCE [LARGE SCALE GENOMIC DNA]</scope>
    <source>
        <strain>972 / ATCC 24843</strain>
    </source>
</reference>
<accession>Q09670</accession>
<comment type="catalytic activity">
    <reaction>
        <text>A + NADPH + H(+) = AH2 + NADP(+)</text>
        <dbReference type="Rhea" id="RHEA:13149"/>
        <dbReference type="ChEBI" id="CHEBI:13193"/>
        <dbReference type="ChEBI" id="CHEBI:15378"/>
        <dbReference type="ChEBI" id="CHEBI:17499"/>
        <dbReference type="ChEBI" id="CHEBI:57783"/>
        <dbReference type="ChEBI" id="CHEBI:58349"/>
        <dbReference type="EC" id="1.6.99.1"/>
    </reaction>
</comment>
<comment type="cofactor">
    <cofactor>
        <name>FMN</name>
        <dbReference type="ChEBI" id="CHEBI:58210"/>
    </cofactor>
</comment>
<comment type="subunit">
    <text evidence="1">Homodimer or heterodimer.</text>
</comment>
<comment type="similarity">
    <text evidence="2">Belongs to the NADH:flavin oxidoreductase/NADH oxidase family.</text>
</comment>
<keyword id="KW-0285">Flavoprotein</keyword>
<keyword id="KW-0288">FMN</keyword>
<keyword id="KW-0521">NADP</keyword>
<keyword id="KW-0560">Oxidoreductase</keyword>
<keyword id="KW-1185">Reference proteome</keyword>
<dbReference type="EC" id="1.6.99.1"/>
<dbReference type="EMBL" id="CU329670">
    <property type="protein sequence ID" value="CAA89954.1"/>
    <property type="molecule type" value="Genomic_DNA"/>
</dbReference>
<dbReference type="PIR" id="S55482">
    <property type="entry name" value="S55482"/>
</dbReference>
<dbReference type="RefSeq" id="NP_592817.1">
    <property type="nucleotide sequence ID" value="NM_001018217.2"/>
</dbReference>
<dbReference type="SMR" id="Q09670"/>
<dbReference type="BioGRID" id="278043">
    <property type="interactions" value="24"/>
</dbReference>
<dbReference type="FunCoup" id="Q09670">
    <property type="interactions" value="270"/>
</dbReference>
<dbReference type="STRING" id="284812.Q09670"/>
<dbReference type="PaxDb" id="4896-SPAC5H10.04.1"/>
<dbReference type="EnsemblFungi" id="SPAC5H10.04.1">
    <property type="protein sequence ID" value="SPAC5H10.04.1:pep"/>
    <property type="gene ID" value="SPAC5H10.04"/>
</dbReference>
<dbReference type="KEGG" id="spo:2541543"/>
<dbReference type="PomBase" id="SPAC5H10.04"/>
<dbReference type="VEuPathDB" id="FungiDB:SPAC5H10.04"/>
<dbReference type="eggNOG" id="KOG0134">
    <property type="taxonomic scope" value="Eukaryota"/>
</dbReference>
<dbReference type="HOGENOM" id="CLU_012153_0_0_1"/>
<dbReference type="InParanoid" id="Q09670"/>
<dbReference type="OMA" id="EIAYNDC"/>
<dbReference type="PhylomeDB" id="Q09670"/>
<dbReference type="PRO" id="PR:Q09670"/>
<dbReference type="Proteomes" id="UP000002485">
    <property type="component" value="Chromosome I"/>
</dbReference>
<dbReference type="GO" id="GO:0005829">
    <property type="term" value="C:cytosol"/>
    <property type="evidence" value="ECO:0007005"/>
    <property type="project" value="PomBase"/>
</dbReference>
<dbReference type="GO" id="GO:0005634">
    <property type="term" value="C:nucleus"/>
    <property type="evidence" value="ECO:0007005"/>
    <property type="project" value="PomBase"/>
</dbReference>
<dbReference type="GO" id="GO:0010181">
    <property type="term" value="F:FMN binding"/>
    <property type="evidence" value="ECO:0007669"/>
    <property type="project" value="InterPro"/>
</dbReference>
<dbReference type="GO" id="GO:0003959">
    <property type="term" value="F:NADPH dehydrogenase activity"/>
    <property type="evidence" value="ECO:0000255"/>
    <property type="project" value="PomBase"/>
</dbReference>
<dbReference type="GO" id="GO:0016491">
    <property type="term" value="F:oxidoreductase activity"/>
    <property type="evidence" value="ECO:0000318"/>
    <property type="project" value="GO_Central"/>
</dbReference>
<dbReference type="GO" id="GO:0110095">
    <property type="term" value="P:cellular detoxification of aldehyde"/>
    <property type="evidence" value="ECO:0000304"/>
    <property type="project" value="PomBase"/>
</dbReference>
<dbReference type="CDD" id="cd02933">
    <property type="entry name" value="OYE_like_FMN"/>
    <property type="match status" value="1"/>
</dbReference>
<dbReference type="FunFam" id="3.20.20.70:FF:000138">
    <property type="entry name" value="NADPH dehydrogenase 1"/>
    <property type="match status" value="1"/>
</dbReference>
<dbReference type="Gene3D" id="3.20.20.70">
    <property type="entry name" value="Aldolase class I"/>
    <property type="match status" value="1"/>
</dbReference>
<dbReference type="InterPro" id="IPR013785">
    <property type="entry name" value="Aldolase_TIM"/>
</dbReference>
<dbReference type="InterPro" id="IPR001155">
    <property type="entry name" value="OxRdtase_FMN_N"/>
</dbReference>
<dbReference type="InterPro" id="IPR045247">
    <property type="entry name" value="Oye-like"/>
</dbReference>
<dbReference type="PANTHER" id="PTHR22893">
    <property type="entry name" value="NADH OXIDOREDUCTASE-RELATED"/>
    <property type="match status" value="1"/>
</dbReference>
<dbReference type="PANTHER" id="PTHR22893:SF91">
    <property type="entry name" value="NADPH DEHYDROGENASE 2-RELATED"/>
    <property type="match status" value="1"/>
</dbReference>
<dbReference type="Pfam" id="PF00724">
    <property type="entry name" value="Oxidored_FMN"/>
    <property type="match status" value="1"/>
</dbReference>
<dbReference type="SUPFAM" id="SSF51395">
    <property type="entry name" value="FMN-linked oxidoreductases"/>
    <property type="match status" value="1"/>
</dbReference>
<protein>
    <recommendedName>
        <fullName>Putative NADPH dehydrogenase C5H10.04</fullName>
        <ecNumber>1.6.99.1</ecNumber>
    </recommendedName>
    <alternativeName>
        <fullName>Old yellow enzyme homolog 1</fullName>
    </alternativeName>
</protein>
<gene>
    <name type="ORF">SPAC5H10.04</name>
</gene>
<evidence type="ECO:0000250" key="1"/>
<evidence type="ECO:0000305" key="2"/>
<name>OYEA_SCHPO</name>
<sequence>MNDRGELFKPIKVGNMLLQHRIVHAPMTRLRATDYGKITGLMVEYYSQRSMIPGTLLIADATFVGEKSGGFPNNPRCFTKEQAESWIPLVEAVHKNKSFLFIQFWPLPGDLKDEYRNDLEKMQKITYSDCPQDPGGLPAGIHSFDAVQGVEVYKKKYMSKRDIQEHIQDFVNAADLAVNIAKADGVEIHQVNGFLLDRFVLGGFGDQCDPEYRGSIENRCRFPLEVLEAVTRKIGQERVGYRISPFSGWMQKIDFMEVNIYLMSEIAKRFPKLAYIHAIEPRKYWSGHKLVSSEQNTSFLQKYWKGPFITAGGYDPETAVQAANERGVLVAFGRNFIANPDLVFRIKHHIPLNKWDRSSFYLPKTEKGYTDYPFSKEFLQSK</sequence>
<feature type="chain" id="PRO_0000194477" description="Putative NADPH dehydrogenase C5H10.04">
    <location>
        <begin position="1"/>
        <end position="382"/>
    </location>
</feature>
<feature type="binding site" evidence="1">
    <location>
        <position position="28"/>
    </location>
    <ligand>
        <name>FMN</name>
        <dbReference type="ChEBI" id="CHEBI:58210"/>
    </ligand>
</feature>
<feature type="binding site" evidence="1">
    <location>
        <position position="189"/>
    </location>
    <ligand>
        <name>FMN</name>
        <dbReference type="ChEBI" id="CHEBI:58210"/>
    </ligand>
</feature>
<feature type="binding site" evidence="1">
    <location>
        <position position="189"/>
    </location>
    <ligand>
        <name>substrate</name>
    </ligand>
</feature>
<feature type="binding site" evidence="1">
    <location>
        <position position="192"/>
    </location>
    <ligand>
        <name>substrate</name>
    </ligand>
</feature>
<feature type="binding site" evidence="1">
    <location>
        <position position="242"/>
    </location>
    <ligand>
        <name>FMN</name>
        <dbReference type="ChEBI" id="CHEBI:58210"/>
    </ligand>
</feature>
<feature type="binding site" evidence="1">
    <location>
        <position position="334"/>
    </location>
    <ligand>
        <name>FMN</name>
        <dbReference type="ChEBI" id="CHEBI:58210"/>
    </ligand>
</feature>
<feature type="binding site" evidence="1">
    <location>
        <position position="361"/>
    </location>
    <ligand>
        <name>substrate</name>
    </ligand>
</feature>
<organism>
    <name type="scientific">Schizosaccharomyces pombe (strain 972 / ATCC 24843)</name>
    <name type="common">Fission yeast</name>
    <dbReference type="NCBI Taxonomy" id="284812"/>
    <lineage>
        <taxon>Eukaryota</taxon>
        <taxon>Fungi</taxon>
        <taxon>Dikarya</taxon>
        <taxon>Ascomycota</taxon>
        <taxon>Taphrinomycotina</taxon>
        <taxon>Schizosaccharomycetes</taxon>
        <taxon>Schizosaccharomycetales</taxon>
        <taxon>Schizosaccharomycetaceae</taxon>
        <taxon>Schizosaccharomyces</taxon>
    </lineage>
</organism>